<accession>B5FH99</accession>
<protein>
    <recommendedName>
        <fullName evidence="1">UPF0246 protein YaaA</fullName>
    </recommendedName>
</protein>
<comment type="similarity">
    <text evidence="1">Belongs to the UPF0246 family.</text>
</comment>
<reference key="1">
    <citation type="journal article" date="2011" name="J. Bacteriol.">
        <title>Comparative genomics of 28 Salmonella enterica isolates: evidence for CRISPR-mediated adaptive sublineage evolution.</title>
        <authorList>
            <person name="Fricke W.F."/>
            <person name="Mammel M.K."/>
            <person name="McDermott P.F."/>
            <person name="Tartera C."/>
            <person name="White D.G."/>
            <person name="Leclerc J.E."/>
            <person name="Ravel J."/>
            <person name="Cebula T.A."/>
        </authorList>
    </citation>
    <scope>NUCLEOTIDE SEQUENCE [LARGE SCALE GENOMIC DNA]</scope>
    <source>
        <strain>CT_02021853</strain>
    </source>
</reference>
<feature type="chain" id="PRO_1000131137" description="UPF0246 protein YaaA">
    <location>
        <begin position="1"/>
        <end position="257"/>
    </location>
</feature>
<gene>
    <name evidence="1" type="primary">yaaA</name>
    <name type="ordered locus">SeD_A0005</name>
</gene>
<evidence type="ECO:0000255" key="1">
    <source>
        <dbReference type="HAMAP-Rule" id="MF_00652"/>
    </source>
</evidence>
<organism>
    <name type="scientific">Salmonella dublin (strain CT_02021853)</name>
    <dbReference type="NCBI Taxonomy" id="439851"/>
    <lineage>
        <taxon>Bacteria</taxon>
        <taxon>Pseudomonadati</taxon>
        <taxon>Pseudomonadota</taxon>
        <taxon>Gammaproteobacteria</taxon>
        <taxon>Enterobacterales</taxon>
        <taxon>Enterobacteriaceae</taxon>
        <taxon>Salmonella</taxon>
    </lineage>
</organism>
<dbReference type="EMBL" id="CP001144">
    <property type="protein sequence ID" value="ACH74735.1"/>
    <property type="molecule type" value="Genomic_DNA"/>
</dbReference>
<dbReference type="RefSeq" id="WP_000906175.1">
    <property type="nucleotide sequence ID" value="NC_011205.1"/>
</dbReference>
<dbReference type="SMR" id="B5FH99"/>
<dbReference type="KEGG" id="sed:SeD_A0005"/>
<dbReference type="HOGENOM" id="CLU_061989_0_0_6"/>
<dbReference type="Proteomes" id="UP000008322">
    <property type="component" value="Chromosome"/>
</dbReference>
<dbReference type="GO" id="GO:0005829">
    <property type="term" value="C:cytosol"/>
    <property type="evidence" value="ECO:0007669"/>
    <property type="project" value="TreeGrafter"/>
</dbReference>
<dbReference type="GO" id="GO:0033194">
    <property type="term" value="P:response to hydroperoxide"/>
    <property type="evidence" value="ECO:0007669"/>
    <property type="project" value="TreeGrafter"/>
</dbReference>
<dbReference type="HAMAP" id="MF_00652">
    <property type="entry name" value="UPF0246"/>
    <property type="match status" value="1"/>
</dbReference>
<dbReference type="InterPro" id="IPR005583">
    <property type="entry name" value="YaaA"/>
</dbReference>
<dbReference type="NCBIfam" id="NF002541">
    <property type="entry name" value="PRK02101.1-1"/>
    <property type="match status" value="1"/>
</dbReference>
<dbReference type="NCBIfam" id="NF002542">
    <property type="entry name" value="PRK02101.1-3"/>
    <property type="match status" value="1"/>
</dbReference>
<dbReference type="PANTHER" id="PTHR30283:SF4">
    <property type="entry name" value="PEROXIDE STRESS RESISTANCE PROTEIN YAAA"/>
    <property type="match status" value="1"/>
</dbReference>
<dbReference type="PANTHER" id="PTHR30283">
    <property type="entry name" value="PEROXIDE STRESS RESPONSE PROTEIN YAAA"/>
    <property type="match status" value="1"/>
</dbReference>
<dbReference type="Pfam" id="PF03883">
    <property type="entry name" value="H2O2_YaaD"/>
    <property type="match status" value="1"/>
</dbReference>
<proteinExistence type="inferred from homology"/>
<sequence>MLILISPAKTLDYQSPLATTRYTQPELLDHSQQLIQQARQLSAPQISRLMGISDKLADLNATRFHDWQPHFTPDNARQAILAFKGDVYTGLQAETFNDADFDFAQQHLRMLSGLYGVLRPLDLMQPYRLEMGIRLENPRGKDLYQFWGDIITDKLNEALEAQGDRVVVNLASEEYFKSVKPKKLNAELIKPVFLDEKNGKFKVVSFYAKKARGLMSRFIIENRLTKPEQLTAFDREGYFFDEETSTQDELVFKRYEQ</sequence>
<name>YAAA_SALDC</name>